<reference key="1">
    <citation type="journal article" date="2005" name="Am. J. Med. Genet. A">
        <title>Barth syndrome: TAZ gene mutations, mRNAs, and evolution.</title>
        <authorList>
            <person name="Gonzalez I.L."/>
        </authorList>
    </citation>
    <scope>NUCLEOTIDE SEQUENCE [GENOMIC DNA]</scope>
</reference>
<reference key="2">
    <citation type="submission" date="2012-10" db="EMBL/GenBank/DDBJ databases">
        <title>De novo assembly of the reference chimpanzee transcriptome from NextGen mRNA sequences.</title>
        <authorList>
            <person name="Maudhoo M.D."/>
            <person name="Meehan D.T."/>
            <person name="Norgren R.B."/>
        </authorList>
    </citation>
    <scope>NUCLEOTIDE SEQUENCE [LARGE SCALE MRNA] (ISOFORM 1)</scope>
    <source>
        <tissue>Adipose tissue</tissue>
        <tissue>Skeletal muscle</tissue>
        <tissue>Skin</tissue>
        <tissue>Vascular smooth muscle</tissue>
    </source>
</reference>
<reference key="3">
    <citation type="journal article" date="2005" name="Nature">
        <title>Initial sequence of the chimpanzee genome and comparison with the human genome.</title>
        <authorList>
            <consortium name="Chimpanzee sequencing and analysis consortium"/>
        </authorList>
    </citation>
    <scope>NUCLEOTIDE SEQUENCE [LARGE SCALE GENOMIC DNA]</scope>
</reference>
<protein>
    <recommendedName>
        <fullName>Tafazzin</fullName>
        <shortName>Taz</shortName>
        <ecNumber evidence="2">2.3.1.-</ecNumber>
    </recommendedName>
</protein>
<gene>
    <name type="primary">TAFAZZIN</name>
    <name type="synonym">TAZ</name>
</gene>
<proteinExistence type="evidence at transcript level"/>
<name>TAZ_PANTR</name>
<feature type="chain" id="PRO_0000220930" description="Tafazzin">
    <location>
        <begin position="1"/>
        <end position="262"/>
    </location>
</feature>
<feature type="topological domain" description="Mitochondrial intermembrane" evidence="2">
    <location>
        <begin position="1"/>
        <end position="14"/>
    </location>
</feature>
<feature type="intramembrane region" evidence="6">
    <location>
        <begin position="15"/>
        <end position="35"/>
    </location>
</feature>
<feature type="topological domain" description="Mitochondrial intermembrane" evidence="2">
    <location>
        <begin position="36"/>
        <end position="262"/>
    </location>
</feature>
<feature type="region of interest" description="Mitochondrial targeting sequence" evidence="2">
    <location>
        <begin position="82"/>
        <end position="92"/>
    </location>
</feature>
<feature type="region of interest" description="Mitochondrial targeting sequence" evidence="2">
    <location>
        <begin position="155"/>
        <end position="190"/>
    </location>
</feature>
<feature type="short sequence motif" description="HXXXXD motif" evidence="3">
    <location>
        <begin position="69"/>
        <end position="74"/>
    </location>
</feature>
<feature type="splice variant" id="VSP_061369" description="In isoform 2.">
    <original>R</original>
    <variation>RGAEFFQAENEGKGVLDTGRHMPGAGKRREK</variation>
    <location>
        <position position="123"/>
    </location>
</feature>
<accession>Q6IV84</accession>
<accession>A0A2J8IN60</accession>
<accession>K7CAX8</accession>
<evidence type="ECO:0000250" key="1">
    <source>
        <dbReference type="UniProtKB" id="Q06510"/>
    </source>
</evidence>
<evidence type="ECO:0000250" key="2">
    <source>
        <dbReference type="UniProtKB" id="Q16635"/>
    </source>
</evidence>
<evidence type="ECO:0000250" key="3">
    <source>
        <dbReference type="UniProtKB" id="Q3TFD2"/>
    </source>
</evidence>
<evidence type="ECO:0000250" key="4">
    <source>
        <dbReference type="UniProtKB" id="Q91WF0"/>
    </source>
</evidence>
<evidence type="ECO:0000250" key="5">
    <source>
        <dbReference type="UniProtKB" id="Q9V6G5"/>
    </source>
</evidence>
<evidence type="ECO:0000255" key="6"/>
<evidence type="ECO:0000305" key="7"/>
<keyword id="KW-0012">Acyltransferase</keyword>
<keyword id="KW-0025">Alternative splicing</keyword>
<keyword id="KW-0443">Lipid metabolism</keyword>
<keyword id="KW-0472">Membrane</keyword>
<keyword id="KW-0496">Mitochondrion</keyword>
<keyword id="KW-0999">Mitochondrion inner membrane</keyword>
<keyword id="KW-1000">Mitochondrion outer membrane</keyword>
<keyword id="KW-1185">Reference proteome</keyword>
<keyword id="KW-0808">Transferase</keyword>
<comment type="function">
    <text evidence="1 2 4 5">Acyltransferase required to remodel newly synthesized phospholipid cardiolipin (1',3'-bis-[1,2-diacyl-sn-glycero-3-phospho]-glycerol or CL), a key component of the mitochondrial inner membrane, with tissue specific acyl chains necessary for adequate mitochondrial function (By similarity). Its role in cellular physiology is to improve mitochondrial performance (By similarity). CL is critical for the coassembly of lipids and proteins in mitochondrial membranes, for instance, remodeling of the acyl groups of CL in the mitochondrial inner membrane affects the assembly and stability of respiratory chain complex IV and its supercomplex forms (By similarity). Catalyzes the transacylation between phospholipids and lysophospholipids, with the highest rate being between phosphatidylcholine (1,2-diacyl-sn-glycero-3-phosphocholine or PC) and CL. Catalyzes both 1-acyl-sn-glycero-3-phosphocholine (lysophosphatidylcholine or LPC) reacylation and PC-CL transacylation, that means, it exchanges acyl groups between CL and PC by a combination of forward and reverse transacylations. Also catalyzes transacylations between other phospholipids such as phosphatidylethanolamine (1,2-diacyl-sn-glycero-3-phosphoethanolamine or PE) and CL, between PC and PE, and between PC and phosphatidate (1,2-diacyl-sn-glycero-3-phosphate or PA), although at lower rate. Not regiospecific, it transfers acyl groups into any of the sn-1 and sn-2 positions of the monolysocardiolipin (MLCL), which is an important prerequisite for uniformity and symmetry in CL acyl distribution. Cannot transacylate dilysocardiolipin (DLCL), thus, the role of MLCL is limited to that of an acyl acceptor. CoA-independent, it can reshuffle molecular species within a single phospholipid class. Redistributes fatty acids between MLCL, CL, and other lipids, which prolongs the half-life of CL. Its action is completely reversible, which allows for cyclic changes, such as fission and fusion or bending and flattening of the membrane. Hence, by contributing to the flexibility of the lipid composition, it plays an important role in the dynamics of mitochondria membranes. Essential for the final stage of spermatogenesis, spermatid individualization (By similarity). Required for the initiation of mitophagy (By similarity). Required to ensure progression of spermatocytes through meiosis (By similarity).</text>
</comment>
<comment type="catalytic activity">
    <reaction evidence="2">
        <text>a 1-acyl-sn-glycero-3-phosphate + a 1,2-diacyl-sn-glycero-3-phospho-(1'-sn-glycerol) = 1-acyl-sn-glycero-3-phospho-(1'-sn-glycerol) + a 1,2-diacyl-sn-glycero-3-phosphate</text>
        <dbReference type="Rhea" id="RHEA:67748"/>
        <dbReference type="ChEBI" id="CHEBI:57970"/>
        <dbReference type="ChEBI" id="CHEBI:58608"/>
        <dbReference type="ChEBI" id="CHEBI:64716"/>
        <dbReference type="ChEBI" id="CHEBI:64840"/>
    </reaction>
    <physiologicalReaction direction="left-to-right" evidence="2">
        <dbReference type="Rhea" id="RHEA:67749"/>
    </physiologicalReaction>
    <physiologicalReaction direction="right-to-left" evidence="2">
        <dbReference type="Rhea" id="RHEA:67750"/>
    </physiologicalReaction>
</comment>
<comment type="catalytic activity">
    <reaction evidence="2">
        <text>1-hexadecanoyl-2-(9Z,12Z-octadecadienoyl)-sn-glycero-3-phospho-(1'-sn-glycerol) + 1-(9Z-octadecenoyl)-sn-glycero-3-phosphate = 1-(9Z)-octadecenoyl-2-(9Z,12Z)-octadecadienoyl-sn-glycero-3-phosphate + 1-hexadecanoyl-sn-glycero-3-phospho-(1'-sn-glycerol)</text>
        <dbReference type="Rhea" id="RHEA:67752"/>
        <dbReference type="ChEBI" id="CHEBI:72840"/>
        <dbReference type="ChEBI" id="CHEBI:74544"/>
        <dbReference type="ChEBI" id="CHEBI:74563"/>
        <dbReference type="ChEBI" id="CHEBI:75158"/>
    </reaction>
    <physiologicalReaction direction="left-to-right" evidence="2">
        <dbReference type="Rhea" id="RHEA:67753"/>
    </physiologicalReaction>
    <physiologicalReaction direction="right-to-left" evidence="2">
        <dbReference type="Rhea" id="RHEA:67754"/>
    </physiologicalReaction>
</comment>
<comment type="catalytic activity">
    <reaction evidence="2">
        <text>1'-[1,2-diacyl-sn-glycero-3-phospho],3'-[1-acyl-sn-glycero-3-phospho]-glycerol + a 1,2-diacyl-sn-glycero-3-phosphocholine = a cardiolipin + a 1-acyl-sn-glycero-3-phosphocholine</text>
        <dbReference type="Rhea" id="RHEA:33731"/>
        <dbReference type="ChEBI" id="CHEBI:57643"/>
        <dbReference type="ChEBI" id="CHEBI:58168"/>
        <dbReference type="ChEBI" id="CHEBI:62237"/>
        <dbReference type="ChEBI" id="CHEBI:64743"/>
    </reaction>
    <physiologicalReaction direction="left-to-right" evidence="2">
        <dbReference type="Rhea" id="RHEA:33732"/>
    </physiologicalReaction>
    <physiologicalReaction direction="right-to-left" evidence="2">
        <dbReference type="Rhea" id="RHEA:33733"/>
    </physiologicalReaction>
</comment>
<comment type="catalytic activity">
    <reaction evidence="2">
        <text>1-hexadecanoyl-2-(9Z,12Z-octadecadienoyl)-sn-glycero-3-phosphocholine + 1-hexadecanoyl-sn-glycero-3-phosphocholine = 2-(9Z,12Z-octadecadienoyl)-sn-glycero-3-phosphocholine + 1,2-dihexadecanoyl-sn-glycero-3-phosphocholine</text>
        <dbReference type="Rhea" id="RHEA:68988"/>
        <dbReference type="ChEBI" id="CHEBI:72998"/>
        <dbReference type="ChEBI" id="CHEBI:72999"/>
        <dbReference type="ChEBI" id="CHEBI:73002"/>
        <dbReference type="ChEBI" id="CHEBI:76084"/>
    </reaction>
    <physiologicalReaction direction="left-to-right" evidence="2">
        <dbReference type="Rhea" id="RHEA:68989"/>
    </physiologicalReaction>
    <physiologicalReaction direction="right-to-left" evidence="2">
        <dbReference type="Rhea" id="RHEA:68990"/>
    </physiologicalReaction>
</comment>
<comment type="catalytic activity">
    <reaction evidence="2">
        <text>1,2-di-(9Z-octadecenoyl)-sn-glycero-3-phosphocholine + 1-hexadecanoyl-sn-glycero-3-phosphocholine = 1-hexadecanoyl-2-(9Z-octadecenoyl)-sn-glycero-3-phosphocholine + 1-(9Z-octadecenoyl)-sn-glycero-3-phosphocholine</text>
        <dbReference type="Rhea" id="RHEA:43816"/>
        <dbReference type="ChEBI" id="CHEBI:28610"/>
        <dbReference type="ChEBI" id="CHEBI:72998"/>
        <dbReference type="ChEBI" id="CHEBI:73001"/>
        <dbReference type="ChEBI" id="CHEBI:74669"/>
    </reaction>
    <physiologicalReaction direction="left-to-right" evidence="2">
        <dbReference type="Rhea" id="RHEA:43817"/>
    </physiologicalReaction>
    <physiologicalReaction direction="right-to-left" evidence="2">
        <dbReference type="Rhea" id="RHEA:43818"/>
    </physiologicalReaction>
</comment>
<comment type="pathway">
    <text evidence="1">Phospholipid metabolism.</text>
</comment>
<comment type="subunit">
    <text evidence="2">Associates with multiple protein complexes.</text>
</comment>
<comment type="subcellular location">
    <subcellularLocation>
        <location evidence="2">Mitochondrion outer membrane</location>
        <topology evidence="2">Peripheral membrane protein</topology>
        <orientation evidence="2">Intermembrane side</orientation>
    </subcellularLocation>
    <subcellularLocation>
        <location evidence="2">Mitochondrion inner membrane</location>
        <topology evidence="2">Peripheral membrane protein</topology>
        <orientation evidence="2">Intermembrane side</orientation>
    </subcellularLocation>
</comment>
<comment type="alternative products">
    <event type="alternative splicing"/>
    <isoform>
        <id>Q6IV84-2</id>
        <name>1</name>
        <sequence type="displayed"/>
    </isoform>
    <isoform>
        <id>Q6IV84-1</id>
        <name>2</name>
        <sequence type="described" ref="VSP_061369"/>
    </isoform>
</comment>
<comment type="domain">
    <text evidence="3">The HXXXXD motif is essential for acyltransferase activity.</text>
</comment>
<comment type="miscellaneous">
    <text evidence="2">The enzyme was named after a masochistic character Tafazzi, once popular on Italian television, apparently due to the difficulty encountered for its identification and characterization.</text>
</comment>
<comment type="similarity">
    <text evidence="7">Belongs to the taffazin family.</text>
</comment>
<dbReference type="EC" id="2.3.1.-" evidence="2"/>
<dbReference type="EMBL" id="AY621040">
    <property type="protein sequence ID" value="AAT45904.1"/>
    <property type="molecule type" value="Genomic_DNA"/>
</dbReference>
<dbReference type="EMBL" id="AY621038">
    <property type="protein sequence ID" value="AAT45904.1"/>
    <property type="status" value="JOINED"/>
    <property type="molecule type" value="Genomic_DNA"/>
</dbReference>
<dbReference type="EMBL" id="AY621039">
    <property type="protein sequence ID" value="AAT45904.1"/>
    <property type="status" value="JOINED"/>
    <property type="molecule type" value="Genomic_DNA"/>
</dbReference>
<dbReference type="EMBL" id="GABD01003841">
    <property type="protein sequence ID" value="JAA29259.1"/>
    <property type="molecule type" value="mRNA"/>
</dbReference>
<dbReference type="EMBL" id="GABE01005013">
    <property type="protein sequence ID" value="JAA39726.1"/>
    <property type="molecule type" value="mRNA"/>
</dbReference>
<dbReference type="EMBL" id="GABC01008703">
    <property type="protein sequence ID" value="JAA02635.1"/>
    <property type="molecule type" value="mRNA"/>
</dbReference>
<dbReference type="EMBL" id="GABF01009286">
    <property type="protein sequence ID" value="JAA12859.1"/>
    <property type="molecule type" value="mRNA"/>
</dbReference>
<dbReference type="EMBL" id="AACZ04038344">
    <property type="status" value="NOT_ANNOTATED_CDS"/>
    <property type="molecule type" value="Genomic_DNA"/>
</dbReference>
<dbReference type="EMBL" id="AACZ04066867">
    <property type="status" value="NOT_ANNOTATED_CDS"/>
    <property type="molecule type" value="Genomic_DNA"/>
</dbReference>
<dbReference type="EMBL" id="AACZ04066868">
    <property type="status" value="NOT_ANNOTATED_CDS"/>
    <property type="molecule type" value="Genomic_DNA"/>
</dbReference>
<dbReference type="RefSeq" id="NP_001009011.1">
    <molecule id="Q6IV84-1"/>
    <property type="nucleotide sequence ID" value="NM_001009011.1"/>
</dbReference>
<dbReference type="RefSeq" id="XP_016798107.1">
    <molecule id="Q6IV84-2"/>
    <property type="nucleotide sequence ID" value="XM_016942618.3"/>
</dbReference>
<dbReference type="SMR" id="Q6IV84"/>
<dbReference type="FunCoup" id="Q6IV84">
    <property type="interactions" value="1338"/>
</dbReference>
<dbReference type="STRING" id="9598.ENSPTRP00000038670"/>
<dbReference type="PaxDb" id="9598-ENSPTRP00000038670"/>
<dbReference type="Ensembl" id="ENSPTRT00000108211.1">
    <molecule id="Q6IV84-2"/>
    <property type="protein sequence ID" value="ENSPTRP00000082354.1"/>
    <property type="gene ID" value="ENSPTRG00000022434.6"/>
</dbReference>
<dbReference type="GeneID" id="449590"/>
<dbReference type="KEGG" id="ptr:449590"/>
<dbReference type="CTD" id="6901"/>
<dbReference type="eggNOG" id="KOG2847">
    <property type="taxonomic scope" value="Eukaryota"/>
</dbReference>
<dbReference type="GeneTree" id="ENSGT00390000018621"/>
<dbReference type="InParanoid" id="Q6IV84"/>
<dbReference type="Proteomes" id="UP000002277">
    <property type="component" value="Chromosome X"/>
</dbReference>
<dbReference type="Bgee" id="ENSPTRG00000022434">
    <property type="expression patterns" value="Expressed in cerebellar cortex and 20 other cell types or tissues"/>
</dbReference>
<dbReference type="GO" id="GO:0005743">
    <property type="term" value="C:mitochondrial inner membrane"/>
    <property type="evidence" value="ECO:0007669"/>
    <property type="project" value="UniProtKB-SubCell"/>
</dbReference>
<dbReference type="GO" id="GO:0031966">
    <property type="term" value="C:mitochondrial membrane"/>
    <property type="evidence" value="ECO:0000318"/>
    <property type="project" value="GO_Central"/>
</dbReference>
<dbReference type="GO" id="GO:0005741">
    <property type="term" value="C:mitochondrial outer membrane"/>
    <property type="evidence" value="ECO:0007669"/>
    <property type="project" value="UniProtKB-SubCell"/>
</dbReference>
<dbReference type="GO" id="GO:0005739">
    <property type="term" value="C:mitochondrion"/>
    <property type="evidence" value="ECO:0000250"/>
    <property type="project" value="UniProtKB"/>
</dbReference>
<dbReference type="GO" id="GO:0047184">
    <property type="term" value="F:1-acylglycerophosphocholine O-acyltransferase activity"/>
    <property type="evidence" value="ECO:0000318"/>
    <property type="project" value="GO_Central"/>
</dbReference>
<dbReference type="GO" id="GO:0035965">
    <property type="term" value="P:cardiolipin acyl-chain remodeling"/>
    <property type="evidence" value="ECO:0000250"/>
    <property type="project" value="UniProtKB"/>
</dbReference>
<dbReference type="GO" id="GO:0032048">
    <property type="term" value="P:cardiolipin metabolic process"/>
    <property type="evidence" value="ECO:0000250"/>
    <property type="project" value="UniProtKB"/>
</dbReference>
<dbReference type="GO" id="GO:0007007">
    <property type="term" value="P:inner mitochondrial membrane organization"/>
    <property type="evidence" value="ECO:0000318"/>
    <property type="project" value="GO_Central"/>
</dbReference>
<dbReference type="CDD" id="cd07989">
    <property type="entry name" value="LPLAT_AGPAT-like"/>
    <property type="match status" value="1"/>
</dbReference>
<dbReference type="InterPro" id="IPR002123">
    <property type="entry name" value="Plipid/glycerol_acylTrfase"/>
</dbReference>
<dbReference type="InterPro" id="IPR000872">
    <property type="entry name" value="Tafazzin"/>
</dbReference>
<dbReference type="PANTHER" id="PTHR12497:SF0">
    <property type="entry name" value="TAFAZZIN"/>
    <property type="match status" value="1"/>
</dbReference>
<dbReference type="PANTHER" id="PTHR12497">
    <property type="entry name" value="TAZ PROTEIN TAFAZZIN"/>
    <property type="match status" value="1"/>
</dbReference>
<dbReference type="Pfam" id="PF01553">
    <property type="entry name" value="Acyltransferase"/>
    <property type="match status" value="1"/>
</dbReference>
<dbReference type="PRINTS" id="PR00979">
    <property type="entry name" value="TAFAZZIN"/>
</dbReference>
<dbReference type="SMART" id="SM00563">
    <property type="entry name" value="PlsC"/>
    <property type="match status" value="1"/>
</dbReference>
<dbReference type="SUPFAM" id="SSF69593">
    <property type="entry name" value="Glycerol-3-phosphate (1)-acyltransferase"/>
    <property type="match status" value="1"/>
</dbReference>
<sequence length="262" mass="30161">MPLHVKWPFPAVPPLTWTLASSVVMGLVGTYSCFWTKYMNHLTVHNKEVLYELIENRGPATPLITVSNHQSCMDDPHLWGILKLRHIWNLKLMRWTPAAADICFTKELHSHFFSLGKCVPVCRGDGVYQKGMDFILEKLNHGDWVHIFPEGKVNMSSEFLRFKWGIGRLIAECHLNPIILPLWHVGMNDVLPNSPPYFPRFGQKITVLIGKPFSALPVLERLRAENKSAVEMRKALTDFIQEEFQHLKTQAEQLHNHLQPGR</sequence>
<organism>
    <name type="scientific">Pan troglodytes</name>
    <name type="common">Chimpanzee</name>
    <dbReference type="NCBI Taxonomy" id="9598"/>
    <lineage>
        <taxon>Eukaryota</taxon>
        <taxon>Metazoa</taxon>
        <taxon>Chordata</taxon>
        <taxon>Craniata</taxon>
        <taxon>Vertebrata</taxon>
        <taxon>Euteleostomi</taxon>
        <taxon>Mammalia</taxon>
        <taxon>Eutheria</taxon>
        <taxon>Euarchontoglires</taxon>
        <taxon>Primates</taxon>
        <taxon>Haplorrhini</taxon>
        <taxon>Catarrhini</taxon>
        <taxon>Hominidae</taxon>
        <taxon>Pan</taxon>
    </lineage>
</organism>